<organism>
    <name type="scientific">Chilobrachys guangxiensis</name>
    <name type="common">Chinese earth tiger tarantula</name>
    <name type="synonym">Chilobrachys jingzhao</name>
    <dbReference type="NCBI Taxonomy" id="278060"/>
    <lineage>
        <taxon>Eukaryota</taxon>
        <taxon>Metazoa</taxon>
        <taxon>Ecdysozoa</taxon>
        <taxon>Arthropoda</taxon>
        <taxon>Chelicerata</taxon>
        <taxon>Arachnida</taxon>
        <taxon>Araneae</taxon>
        <taxon>Mygalomorphae</taxon>
        <taxon>Theraphosidae</taxon>
        <taxon>Chilobrachys</taxon>
    </lineage>
</organism>
<keyword id="KW-0903">Direct protein sequencing</keyword>
<keyword id="KW-1015">Disulfide bond</keyword>
<keyword id="KW-0872">Ion channel impairing toxin</keyword>
<keyword id="KW-0960">Knottin</keyword>
<keyword id="KW-0964">Secreted</keyword>
<keyword id="KW-0800">Toxin</keyword>
<protein>
    <recommendedName>
        <fullName>Jingzhaotoxin F5-21.66</fullName>
    </recommendedName>
    <alternativeName>
        <fullName>Peptide F5-21.66</fullName>
    </alternativeName>
</protein>
<feature type="peptide" id="PRO_0000398560" description="Jingzhaotoxin F5-21.66">
    <location>
        <begin position="1"/>
        <end position="35"/>
    </location>
</feature>
<feature type="disulfide bond" evidence="1">
    <location>
        <begin position="2"/>
        <end position="16"/>
    </location>
</feature>
<feature type="disulfide bond" evidence="1">
    <location>
        <begin position="9"/>
        <end position="21"/>
    </location>
</feature>
<feature type="disulfide bond" evidence="1">
    <location>
        <begin position="15"/>
        <end position="29"/>
    </location>
</feature>
<comment type="function">
    <text>Probable ion channel inhibitor.</text>
</comment>
<comment type="subcellular location">
    <subcellularLocation>
        <location>Secreted</location>
    </subcellularLocation>
</comment>
<comment type="tissue specificity">
    <text>Expressed by the venom gland.</text>
</comment>
<comment type="domain">
    <text evidence="1">The presence of a 'disulfide through disulfide knot' structurally defines this protein as a knottin.</text>
</comment>
<comment type="similarity">
    <text evidence="2">Belongs to the neurotoxin 10 (Hwtx-1) family. 48 (Jztx-F5) subfamily.</text>
</comment>
<proteinExistence type="evidence at protein level"/>
<accession>P0CH51</accession>
<dbReference type="SMR" id="P0CH51"/>
<dbReference type="GO" id="GO:0005576">
    <property type="term" value="C:extracellular region"/>
    <property type="evidence" value="ECO:0007669"/>
    <property type="project" value="UniProtKB-SubCell"/>
</dbReference>
<dbReference type="GO" id="GO:0008200">
    <property type="term" value="F:ion channel inhibitor activity"/>
    <property type="evidence" value="ECO:0007669"/>
    <property type="project" value="InterPro"/>
</dbReference>
<dbReference type="GO" id="GO:0090729">
    <property type="term" value="F:toxin activity"/>
    <property type="evidence" value="ECO:0007669"/>
    <property type="project" value="UniProtKB-KW"/>
</dbReference>
<dbReference type="InterPro" id="IPR011696">
    <property type="entry name" value="Huwentoxin-1"/>
</dbReference>
<dbReference type="Pfam" id="PF07740">
    <property type="entry name" value="Toxin_12"/>
    <property type="match status" value="1"/>
</dbReference>
<dbReference type="SUPFAM" id="SSF57059">
    <property type="entry name" value="omega toxin-like"/>
    <property type="match status" value="1"/>
</dbReference>
<evidence type="ECO:0000250" key="1"/>
<evidence type="ECO:0000305" key="2"/>
<sequence>ECKKLFGGCTTSSECCAHLGCKQKWPFYCAWDWSF</sequence>
<reference key="1">
    <citation type="journal article" date="2007" name="Proteomics">
        <title>Proteomic and peptidomic analysis of the venom from Chinese tarantula Chilobrachys jingzhao.</title>
        <authorList>
            <person name="Liao Z."/>
            <person name="Cao J."/>
            <person name="Li S."/>
            <person name="Yan X."/>
            <person name="Hu W."/>
            <person name="He Q."/>
            <person name="Chen J."/>
            <person name="Tang J."/>
            <person name="Xie J."/>
            <person name="Liang S."/>
        </authorList>
    </citation>
    <scope>PROTEIN SEQUENCE</scope>
    <scope>IDENTIFICATION BY MASS SPECTROMETRY</scope>
    <source>
        <tissue>Venom</tissue>
    </source>
</reference>
<name>JZ521_CHIGU</name>